<proteinExistence type="evidence at protein level"/>
<dbReference type="EMBL" id="AK095616">
    <property type="protein sequence ID" value="BAC04591.1"/>
    <property type="status" value="ALT_INIT"/>
    <property type="molecule type" value="mRNA"/>
</dbReference>
<dbReference type="EMBL" id="AK127476">
    <property type="protein sequence ID" value="BAC86997.1"/>
    <property type="status" value="ALT_INIT"/>
    <property type="molecule type" value="mRNA"/>
</dbReference>
<dbReference type="EMBL" id="AK128494">
    <property type="protein sequence ID" value="BAC87465.1"/>
    <property type="molecule type" value="mRNA"/>
</dbReference>
<dbReference type="EMBL" id="AB209086">
    <property type="protein sequence ID" value="BAD92323.1"/>
    <property type="status" value="ALT_INIT"/>
    <property type="molecule type" value="mRNA"/>
</dbReference>
<dbReference type="EMBL" id="BX648842">
    <property type="status" value="NOT_ANNOTATED_CDS"/>
    <property type="molecule type" value="mRNA"/>
</dbReference>
<dbReference type="EMBL" id="AC010615">
    <property type="status" value="NOT_ANNOTATED_CDS"/>
    <property type="molecule type" value="Genomic_DNA"/>
</dbReference>
<dbReference type="EMBL" id="CH471106">
    <property type="protein sequence ID" value="EAW84898.1"/>
    <property type="molecule type" value="Genomic_DNA"/>
</dbReference>
<dbReference type="EMBL" id="BC006408">
    <property type="protein sequence ID" value="AAH06408.1"/>
    <property type="molecule type" value="mRNA"/>
</dbReference>
<dbReference type="CCDS" id="CCDS12411.1">
    <molecule id="Q6ZR52-3"/>
</dbReference>
<dbReference type="CCDS" id="CCDS12412.1">
    <molecule id="Q6ZR52-1"/>
</dbReference>
<dbReference type="CCDS" id="CCDS42536.1">
    <molecule id="Q6ZR52-2"/>
</dbReference>
<dbReference type="RefSeq" id="NP_001070146.1">
    <molecule id="Q6ZR52-2"/>
    <property type="nucleotide sequence ID" value="NM_001076678.3"/>
</dbReference>
<dbReference type="RefSeq" id="NP_663299.2">
    <molecule id="Q6ZR52-3"/>
    <property type="nucleotide sequence ID" value="NM_145326.3"/>
</dbReference>
<dbReference type="RefSeq" id="NP_787106.4">
    <molecule id="Q6ZR52-1"/>
    <property type="nucleotide sequence ID" value="NM_175910.6"/>
</dbReference>
<dbReference type="RefSeq" id="XP_047294636.1">
    <molecule id="Q6ZR52-1"/>
    <property type="nucleotide sequence ID" value="XM_047438680.1"/>
</dbReference>
<dbReference type="RefSeq" id="XP_047294637.1">
    <molecule id="Q6ZR52-1"/>
    <property type="nucleotide sequence ID" value="XM_047438681.1"/>
</dbReference>
<dbReference type="SMR" id="Q6ZR52"/>
<dbReference type="BioGRID" id="129880">
    <property type="interactions" value="5"/>
</dbReference>
<dbReference type="FunCoup" id="Q6ZR52">
    <property type="interactions" value="17"/>
</dbReference>
<dbReference type="IntAct" id="Q6ZR52">
    <property type="interactions" value="3"/>
</dbReference>
<dbReference type="GlyGen" id="Q6ZR52">
    <property type="glycosylation" value="1 site, 1 O-linked glycan (1 site)"/>
</dbReference>
<dbReference type="iPTMnet" id="Q6ZR52"/>
<dbReference type="PhosphoSitePlus" id="Q6ZR52"/>
<dbReference type="SwissPalm" id="Q6ZR52"/>
<dbReference type="BioMuta" id="ZNF493"/>
<dbReference type="DMDM" id="145559547"/>
<dbReference type="jPOST" id="Q6ZR52"/>
<dbReference type="MassIVE" id="Q6ZR52"/>
<dbReference type="PaxDb" id="9606-ENSP00000376110"/>
<dbReference type="PeptideAtlas" id="Q6ZR52"/>
<dbReference type="ProteomicsDB" id="68112">
    <molecule id="Q6ZR52-1"/>
</dbReference>
<dbReference type="ProteomicsDB" id="68113">
    <molecule id="Q6ZR52-2"/>
</dbReference>
<dbReference type="Antibodypedia" id="55042">
    <property type="antibodies" value="58 antibodies from 11 providers"/>
</dbReference>
<dbReference type="DNASU" id="284443"/>
<dbReference type="Ensembl" id="ENST00000339914.6">
    <molecule id="Q6ZR52-3"/>
    <property type="protein sequence ID" value="ENSP00000340651.6"/>
    <property type="gene ID" value="ENSG00000196268.12"/>
</dbReference>
<dbReference type="Ensembl" id="ENST00000355504.4">
    <molecule id="Q6ZR52-1"/>
    <property type="protein sequence ID" value="ENSP00000347691.4"/>
    <property type="gene ID" value="ENSG00000196268.12"/>
</dbReference>
<dbReference type="Ensembl" id="ENST00000392288.7">
    <molecule id="Q6ZR52-2"/>
    <property type="protein sequence ID" value="ENSP00000376110.2"/>
    <property type="gene ID" value="ENSG00000196268.12"/>
</dbReference>
<dbReference type="GeneID" id="284443"/>
<dbReference type="KEGG" id="hsa:284443"/>
<dbReference type="MANE-Select" id="ENST00000392288.7">
    <molecule id="Q6ZR52-2"/>
    <property type="protein sequence ID" value="ENSP00000376110.2"/>
    <property type="RefSeq nucleotide sequence ID" value="NM_001076678.3"/>
    <property type="RefSeq protein sequence ID" value="NP_001070146.1"/>
</dbReference>
<dbReference type="UCSC" id="uc002npu.4">
    <molecule id="Q6ZR52-1"/>
    <property type="organism name" value="human"/>
</dbReference>
<dbReference type="AGR" id="HGNC:23708"/>
<dbReference type="CTD" id="284443"/>
<dbReference type="DisGeNET" id="284443"/>
<dbReference type="GeneCards" id="ZNF493"/>
<dbReference type="HGNC" id="HGNC:23708">
    <property type="gene designation" value="ZNF493"/>
</dbReference>
<dbReference type="HPA" id="ENSG00000196268">
    <property type="expression patterns" value="Low tissue specificity"/>
</dbReference>
<dbReference type="neXtProt" id="NX_Q6ZR52"/>
<dbReference type="OpenTargets" id="ENSG00000196268"/>
<dbReference type="PharmGKB" id="PA134932599"/>
<dbReference type="VEuPathDB" id="HostDB:ENSG00000196268"/>
<dbReference type="eggNOG" id="KOG1721">
    <property type="taxonomic scope" value="Eukaryota"/>
</dbReference>
<dbReference type="GeneTree" id="ENSGT00940000161765"/>
<dbReference type="HOGENOM" id="CLU_002678_17_1_1"/>
<dbReference type="InParanoid" id="Q6ZR52"/>
<dbReference type="OMA" id="RSSILXI"/>
<dbReference type="OrthoDB" id="9521202at2759"/>
<dbReference type="PAN-GO" id="Q6ZR52">
    <property type="GO annotations" value="4 GO annotations based on evolutionary models"/>
</dbReference>
<dbReference type="PhylomeDB" id="Q6ZR52"/>
<dbReference type="TreeFam" id="TF343410"/>
<dbReference type="PathwayCommons" id="Q6ZR52"/>
<dbReference type="Reactome" id="R-HSA-212436">
    <property type="pathway name" value="Generic Transcription Pathway"/>
</dbReference>
<dbReference type="SignaLink" id="Q6ZR52"/>
<dbReference type="BioGRID-ORCS" id="284443">
    <property type="hits" value="11 hits in 1141 CRISPR screens"/>
</dbReference>
<dbReference type="ChiTaRS" id="ZNF493">
    <property type="organism name" value="human"/>
</dbReference>
<dbReference type="GenomeRNAi" id="284443"/>
<dbReference type="Pharos" id="Q6ZR52">
    <property type="development level" value="Tdark"/>
</dbReference>
<dbReference type="PRO" id="PR:Q6ZR52"/>
<dbReference type="Proteomes" id="UP000005640">
    <property type="component" value="Chromosome 19"/>
</dbReference>
<dbReference type="RNAct" id="Q6ZR52">
    <property type="molecule type" value="protein"/>
</dbReference>
<dbReference type="Bgee" id="ENSG00000196268">
    <property type="expression patterns" value="Expressed in visceral pleura and 187 other cell types or tissues"/>
</dbReference>
<dbReference type="ExpressionAtlas" id="Q6ZR52">
    <property type="expression patterns" value="baseline and differential"/>
</dbReference>
<dbReference type="GO" id="GO:0005634">
    <property type="term" value="C:nucleus"/>
    <property type="evidence" value="ECO:0000318"/>
    <property type="project" value="GO_Central"/>
</dbReference>
<dbReference type="GO" id="GO:0003677">
    <property type="term" value="F:DNA binding"/>
    <property type="evidence" value="ECO:0007669"/>
    <property type="project" value="UniProtKB-KW"/>
</dbReference>
<dbReference type="GO" id="GO:0008270">
    <property type="term" value="F:zinc ion binding"/>
    <property type="evidence" value="ECO:0007669"/>
    <property type="project" value="UniProtKB-KW"/>
</dbReference>
<dbReference type="GO" id="GO:0006357">
    <property type="term" value="P:regulation of transcription by RNA polymerase II"/>
    <property type="evidence" value="ECO:0000318"/>
    <property type="project" value="GO_Central"/>
</dbReference>
<dbReference type="FunFam" id="3.30.160.60:FF:001737">
    <property type="entry name" value="Zinc finger protein 100"/>
    <property type="match status" value="4"/>
</dbReference>
<dbReference type="FunFam" id="3.30.160.60:FF:002983">
    <property type="entry name" value="Zinc finger protein 107"/>
    <property type="match status" value="1"/>
</dbReference>
<dbReference type="FunFam" id="3.30.160.60:FF:000374">
    <property type="entry name" value="Zinc finger protein 208"/>
    <property type="match status" value="1"/>
</dbReference>
<dbReference type="FunFam" id="3.30.160.60:FF:000034">
    <property type="entry name" value="zinc finger protein 25"/>
    <property type="match status" value="2"/>
</dbReference>
<dbReference type="FunFam" id="3.30.160.60:FF:001868">
    <property type="entry name" value="Zinc finger protein 264"/>
    <property type="match status" value="2"/>
</dbReference>
<dbReference type="FunFam" id="3.30.160.60:FF:002343">
    <property type="entry name" value="Zinc finger protein 33A"/>
    <property type="match status" value="1"/>
</dbReference>
<dbReference type="FunFam" id="3.30.160.60:FF:002402">
    <property type="entry name" value="Zinc finger protein 347"/>
    <property type="match status" value="1"/>
</dbReference>
<dbReference type="FunFam" id="3.30.160.60:FF:000120">
    <property type="entry name" value="Zinc finger protein 430"/>
    <property type="match status" value="3"/>
</dbReference>
<dbReference type="FunFam" id="3.30.160.60:FF:002448">
    <property type="entry name" value="Zinc finger protein 430"/>
    <property type="match status" value="1"/>
</dbReference>
<dbReference type="FunFam" id="3.30.160.60:FF:000362">
    <property type="entry name" value="Zinc finger protein 606"/>
    <property type="match status" value="1"/>
</dbReference>
<dbReference type="FunFam" id="3.30.160.60:FF:002291">
    <property type="entry name" value="Zinc finger protein 648"/>
    <property type="match status" value="1"/>
</dbReference>
<dbReference type="FunFam" id="3.30.160.60:FF:001435">
    <property type="entry name" value="zinc finger protein 777"/>
    <property type="match status" value="1"/>
</dbReference>
<dbReference type="FunFam" id="3.30.160.60:FF:000307">
    <property type="entry name" value="Zinc finger protein ZFP69 isoform 1"/>
    <property type="match status" value="2"/>
</dbReference>
<dbReference type="Gene3D" id="3.30.160.60">
    <property type="entry name" value="Classic Zinc Finger"/>
    <property type="match status" value="21"/>
</dbReference>
<dbReference type="InterPro" id="IPR036236">
    <property type="entry name" value="Znf_C2H2_sf"/>
</dbReference>
<dbReference type="InterPro" id="IPR013087">
    <property type="entry name" value="Znf_C2H2_type"/>
</dbReference>
<dbReference type="PANTHER" id="PTHR23235:SF178">
    <property type="entry name" value="C2H2-TYPE DOMAIN-CONTAINING PROTEIN-RELATED"/>
    <property type="match status" value="1"/>
</dbReference>
<dbReference type="PANTHER" id="PTHR23235">
    <property type="entry name" value="KRUEPPEL-LIKE TRANSCRIPTION FACTOR"/>
    <property type="match status" value="1"/>
</dbReference>
<dbReference type="Pfam" id="PF00096">
    <property type="entry name" value="zf-C2H2"/>
    <property type="match status" value="17"/>
</dbReference>
<dbReference type="SMART" id="SM00355">
    <property type="entry name" value="ZnF_C2H2"/>
    <property type="match status" value="21"/>
</dbReference>
<dbReference type="SUPFAM" id="SSF57667">
    <property type="entry name" value="beta-beta-alpha zinc fingers"/>
    <property type="match status" value="11"/>
</dbReference>
<dbReference type="PROSITE" id="PS00028">
    <property type="entry name" value="ZINC_FINGER_C2H2_1"/>
    <property type="match status" value="18"/>
</dbReference>
<dbReference type="PROSITE" id="PS50157">
    <property type="entry name" value="ZINC_FINGER_C2H2_2"/>
    <property type="match status" value="22"/>
</dbReference>
<gene>
    <name type="primary">ZNF493</name>
</gene>
<comment type="function">
    <text>May be involved in transcriptional regulation.</text>
</comment>
<comment type="interaction">
    <interactant intactId="EBI-12856290">
        <id>Q6ZR52-3</id>
    </interactant>
    <interactant intactId="EBI-1003700">
        <id>Q9H3R5</id>
        <label>CENPH</label>
    </interactant>
    <organismsDiffer>false</organismsDiffer>
    <experiments>3</experiments>
</comment>
<comment type="interaction">
    <interactant intactId="EBI-12856290">
        <id>Q6ZR52-3</id>
    </interactant>
    <interactant intactId="EBI-6165891">
        <id>Q14696</id>
        <label>MESD</label>
    </interactant>
    <organismsDiffer>false</organismsDiffer>
    <experiments>3</experiments>
</comment>
<comment type="subcellular location">
    <subcellularLocation>
        <location evidence="7">Nucleus</location>
    </subcellularLocation>
</comment>
<comment type="alternative products">
    <event type="alternative splicing"/>
    <isoform>
        <id>Q6ZR52-1</id>
        <name>1</name>
        <sequence type="displayed"/>
    </isoform>
    <isoform>
        <id>Q6ZR52-2</id>
        <name>2</name>
        <sequence type="described" ref="VSP_038298"/>
    </isoform>
    <isoform>
        <id>Q6ZR52-3</id>
        <name>3</name>
        <sequence type="described" ref="VSP_046656 VSP_046657"/>
    </isoform>
</comment>
<comment type="sequence caution" evidence="7">
    <conflict type="erroneous initiation">
        <sequence resource="EMBL-CDS" id="BAC04591"/>
    </conflict>
</comment>
<comment type="sequence caution" evidence="7">
    <conflict type="erroneous initiation">
        <sequence resource="EMBL-CDS" id="BAC86997"/>
    </conflict>
</comment>
<comment type="sequence caution" evidence="7">
    <conflict type="erroneous initiation">
        <sequence resource="EMBL-CDS" id="BAD92323"/>
    </conflict>
</comment>
<organism>
    <name type="scientific">Homo sapiens</name>
    <name type="common">Human</name>
    <dbReference type="NCBI Taxonomy" id="9606"/>
    <lineage>
        <taxon>Eukaryota</taxon>
        <taxon>Metazoa</taxon>
        <taxon>Chordata</taxon>
        <taxon>Craniata</taxon>
        <taxon>Vertebrata</taxon>
        <taxon>Euteleostomi</taxon>
        <taxon>Mammalia</taxon>
        <taxon>Eutheria</taxon>
        <taxon>Euarchontoglires</taxon>
        <taxon>Primates</taxon>
        <taxon>Haplorrhini</taxon>
        <taxon>Catarrhini</taxon>
        <taxon>Hominidae</taxon>
        <taxon>Homo</taxon>
    </lineage>
</organism>
<sequence>MNECNVHKEGYNELNQYLTTTQSKIFQCDKYVKVFHKLLNSNRHNTKHTGKKPFKCKKCGKSFCMLLHLCQHKRIHIRENSYRCEECGKAFIWFSTLTRHRRVHTGEKSYKYECGKSFNQDSNLTTHKRIHTGQKPYKCEECGTSFYQFSYLTRHKLIHTREKPYKCEQYGKTFNQSSTLTGHKIIHNGEKPYKCEECGKAFSIFSTPTKHKIIHTEEKSHRCEEYCKAYKESSHLTTHKRIHTGEKPYKCEECGKAFSIFSTLTKHKIIHTEEKSHRCEECGKAYKESSHLTTHKRIHTGEKPYKCEECGKTFSVFSILTKHKIIHTEEKPYKCEECGKAFKRSSTLTKHRIIHTEEKPYKCEECGKAFNQSSTLSIHKIIHTGEKPYKCEECGKAFKRSSTLTIHKMIHTGEKPYKCEECGKAFNRSSHLTTHKRIHTGHKPYKCKECGKSFSVFSTLTKHKIIHTDKKPYKCEECGKAFNRSSILSIHKKIHTGEKPYKCEECGKAFKRSSHLAGHKQIHSVQKPYKCEECGKAFSIFSTLTKHKIIHTEEKPYKCEKCGKTFYRFSNLNTHKIIHTGEKPCKCEECGKAFNHSSNLIKHKLIHTGDKPYKCEACGKAFRRSSHLSRHKIIHIGIHTEETVQK</sequence>
<reference key="1">
    <citation type="journal article" date="2004" name="Nat. Genet.">
        <title>Complete sequencing and characterization of 21,243 full-length human cDNAs.</title>
        <authorList>
            <person name="Ota T."/>
            <person name="Suzuki Y."/>
            <person name="Nishikawa T."/>
            <person name="Otsuki T."/>
            <person name="Sugiyama T."/>
            <person name="Irie R."/>
            <person name="Wakamatsu A."/>
            <person name="Hayashi K."/>
            <person name="Sato H."/>
            <person name="Nagai K."/>
            <person name="Kimura K."/>
            <person name="Makita H."/>
            <person name="Sekine M."/>
            <person name="Obayashi M."/>
            <person name="Nishi T."/>
            <person name="Shibahara T."/>
            <person name="Tanaka T."/>
            <person name="Ishii S."/>
            <person name="Yamamoto J."/>
            <person name="Saito K."/>
            <person name="Kawai Y."/>
            <person name="Isono Y."/>
            <person name="Nakamura Y."/>
            <person name="Nagahari K."/>
            <person name="Murakami K."/>
            <person name="Yasuda T."/>
            <person name="Iwayanagi T."/>
            <person name="Wagatsuma M."/>
            <person name="Shiratori A."/>
            <person name="Sudo H."/>
            <person name="Hosoiri T."/>
            <person name="Kaku Y."/>
            <person name="Kodaira H."/>
            <person name="Kondo H."/>
            <person name="Sugawara M."/>
            <person name="Takahashi M."/>
            <person name="Kanda K."/>
            <person name="Yokoi T."/>
            <person name="Furuya T."/>
            <person name="Kikkawa E."/>
            <person name="Omura Y."/>
            <person name="Abe K."/>
            <person name="Kamihara K."/>
            <person name="Katsuta N."/>
            <person name="Sato K."/>
            <person name="Tanikawa M."/>
            <person name="Yamazaki M."/>
            <person name="Ninomiya K."/>
            <person name="Ishibashi T."/>
            <person name="Yamashita H."/>
            <person name="Murakawa K."/>
            <person name="Fujimori K."/>
            <person name="Tanai H."/>
            <person name="Kimata M."/>
            <person name="Watanabe M."/>
            <person name="Hiraoka S."/>
            <person name="Chiba Y."/>
            <person name="Ishida S."/>
            <person name="Ono Y."/>
            <person name="Takiguchi S."/>
            <person name="Watanabe S."/>
            <person name="Yosida M."/>
            <person name="Hotuta T."/>
            <person name="Kusano J."/>
            <person name="Kanehori K."/>
            <person name="Takahashi-Fujii A."/>
            <person name="Hara H."/>
            <person name="Tanase T.-O."/>
            <person name="Nomura Y."/>
            <person name="Togiya S."/>
            <person name="Komai F."/>
            <person name="Hara R."/>
            <person name="Takeuchi K."/>
            <person name="Arita M."/>
            <person name="Imose N."/>
            <person name="Musashino K."/>
            <person name="Yuuki H."/>
            <person name="Oshima A."/>
            <person name="Sasaki N."/>
            <person name="Aotsuka S."/>
            <person name="Yoshikawa Y."/>
            <person name="Matsunawa H."/>
            <person name="Ichihara T."/>
            <person name="Shiohata N."/>
            <person name="Sano S."/>
            <person name="Moriya S."/>
            <person name="Momiyama H."/>
            <person name="Satoh N."/>
            <person name="Takami S."/>
            <person name="Terashima Y."/>
            <person name="Suzuki O."/>
            <person name="Nakagawa S."/>
            <person name="Senoh A."/>
            <person name="Mizoguchi H."/>
            <person name="Goto Y."/>
            <person name="Shimizu F."/>
            <person name="Wakebe H."/>
            <person name="Hishigaki H."/>
            <person name="Watanabe T."/>
            <person name="Sugiyama A."/>
            <person name="Takemoto M."/>
            <person name="Kawakami B."/>
            <person name="Yamazaki M."/>
            <person name="Watanabe K."/>
            <person name="Kumagai A."/>
            <person name="Itakura S."/>
            <person name="Fukuzumi Y."/>
            <person name="Fujimori Y."/>
            <person name="Komiyama M."/>
            <person name="Tashiro H."/>
            <person name="Tanigami A."/>
            <person name="Fujiwara T."/>
            <person name="Ono T."/>
            <person name="Yamada K."/>
            <person name="Fujii Y."/>
            <person name="Ozaki K."/>
            <person name="Hirao M."/>
            <person name="Ohmori Y."/>
            <person name="Kawabata A."/>
            <person name="Hikiji T."/>
            <person name="Kobatake N."/>
            <person name="Inagaki H."/>
            <person name="Ikema Y."/>
            <person name="Okamoto S."/>
            <person name="Okitani R."/>
            <person name="Kawakami T."/>
            <person name="Noguchi S."/>
            <person name="Itoh T."/>
            <person name="Shigeta K."/>
            <person name="Senba T."/>
            <person name="Matsumura K."/>
            <person name="Nakajima Y."/>
            <person name="Mizuno T."/>
            <person name="Morinaga M."/>
            <person name="Sasaki M."/>
            <person name="Togashi T."/>
            <person name="Oyama M."/>
            <person name="Hata H."/>
            <person name="Watanabe M."/>
            <person name="Komatsu T."/>
            <person name="Mizushima-Sugano J."/>
            <person name="Satoh T."/>
            <person name="Shirai Y."/>
            <person name="Takahashi Y."/>
            <person name="Nakagawa K."/>
            <person name="Okumura K."/>
            <person name="Nagase T."/>
            <person name="Nomura N."/>
            <person name="Kikuchi H."/>
            <person name="Masuho Y."/>
            <person name="Yamashita R."/>
            <person name="Nakai K."/>
            <person name="Yada T."/>
            <person name="Nakamura Y."/>
            <person name="Ohara O."/>
            <person name="Isogai T."/>
            <person name="Sugano S."/>
        </authorList>
    </citation>
    <scope>NUCLEOTIDE SEQUENCE [LARGE SCALE MRNA] (ISOFORM 1)</scope>
    <scope>VARIANTS PHE-195 AND VAL-292</scope>
    <source>
        <tissue>Brain</tissue>
        <tissue>Kidney</tissue>
        <tissue>Thalamus</tissue>
        <tissue>Trachea</tissue>
    </source>
</reference>
<reference key="2">
    <citation type="submission" date="2005-03" db="EMBL/GenBank/DDBJ databases">
        <authorList>
            <person name="Totoki Y."/>
            <person name="Toyoda A."/>
            <person name="Takeda T."/>
            <person name="Sakaki Y."/>
            <person name="Tanaka A."/>
            <person name="Yokoyama S."/>
            <person name="Ohara O."/>
            <person name="Nagase T."/>
            <person name="Kikuno R.F."/>
        </authorList>
    </citation>
    <scope>NUCLEOTIDE SEQUENCE [LARGE SCALE MRNA] (ISOFORM 1)</scope>
    <scope>VARIANT PHE-195</scope>
    <source>
        <tissue>Brain</tissue>
    </source>
</reference>
<reference key="3">
    <citation type="journal article" date="2007" name="BMC Genomics">
        <title>The full-ORF clone resource of the German cDNA consortium.</title>
        <authorList>
            <person name="Bechtel S."/>
            <person name="Rosenfelder H."/>
            <person name="Duda A."/>
            <person name="Schmidt C.P."/>
            <person name="Ernst U."/>
            <person name="Wellenreuther R."/>
            <person name="Mehrle A."/>
            <person name="Schuster C."/>
            <person name="Bahr A."/>
            <person name="Bloecker H."/>
            <person name="Heubner D."/>
            <person name="Hoerlein A."/>
            <person name="Michel G."/>
            <person name="Wedler H."/>
            <person name="Koehrer K."/>
            <person name="Ottenwaelder B."/>
            <person name="Poustka A."/>
            <person name="Wiemann S."/>
            <person name="Schupp I."/>
        </authorList>
    </citation>
    <scope>NUCLEOTIDE SEQUENCE [LARGE SCALE MRNA] (ISOFORM 2)</scope>
    <scope>VARIANT PHE-195</scope>
</reference>
<reference key="4">
    <citation type="journal article" date="2004" name="Nature">
        <title>The DNA sequence and biology of human chromosome 19.</title>
        <authorList>
            <person name="Grimwood J."/>
            <person name="Gordon L.A."/>
            <person name="Olsen A.S."/>
            <person name="Terry A."/>
            <person name="Schmutz J."/>
            <person name="Lamerdin J.E."/>
            <person name="Hellsten U."/>
            <person name="Goodstein D."/>
            <person name="Couronne O."/>
            <person name="Tran-Gyamfi M."/>
            <person name="Aerts A."/>
            <person name="Altherr M."/>
            <person name="Ashworth L."/>
            <person name="Bajorek E."/>
            <person name="Black S."/>
            <person name="Branscomb E."/>
            <person name="Caenepeel S."/>
            <person name="Carrano A.V."/>
            <person name="Caoile C."/>
            <person name="Chan Y.M."/>
            <person name="Christensen M."/>
            <person name="Cleland C.A."/>
            <person name="Copeland A."/>
            <person name="Dalin E."/>
            <person name="Dehal P."/>
            <person name="Denys M."/>
            <person name="Detter J.C."/>
            <person name="Escobar J."/>
            <person name="Flowers D."/>
            <person name="Fotopulos D."/>
            <person name="Garcia C."/>
            <person name="Georgescu A.M."/>
            <person name="Glavina T."/>
            <person name="Gomez M."/>
            <person name="Gonzales E."/>
            <person name="Groza M."/>
            <person name="Hammon N."/>
            <person name="Hawkins T."/>
            <person name="Haydu L."/>
            <person name="Ho I."/>
            <person name="Huang W."/>
            <person name="Israni S."/>
            <person name="Jett J."/>
            <person name="Kadner K."/>
            <person name="Kimball H."/>
            <person name="Kobayashi A."/>
            <person name="Larionov V."/>
            <person name="Leem S.-H."/>
            <person name="Lopez F."/>
            <person name="Lou Y."/>
            <person name="Lowry S."/>
            <person name="Malfatti S."/>
            <person name="Martinez D."/>
            <person name="McCready P.M."/>
            <person name="Medina C."/>
            <person name="Morgan J."/>
            <person name="Nelson K."/>
            <person name="Nolan M."/>
            <person name="Ovcharenko I."/>
            <person name="Pitluck S."/>
            <person name="Pollard M."/>
            <person name="Popkie A.P."/>
            <person name="Predki P."/>
            <person name="Quan G."/>
            <person name="Ramirez L."/>
            <person name="Rash S."/>
            <person name="Retterer J."/>
            <person name="Rodriguez A."/>
            <person name="Rogers S."/>
            <person name="Salamov A."/>
            <person name="Salazar A."/>
            <person name="She X."/>
            <person name="Smith D."/>
            <person name="Slezak T."/>
            <person name="Solovyev V."/>
            <person name="Thayer N."/>
            <person name="Tice H."/>
            <person name="Tsai M."/>
            <person name="Ustaszewska A."/>
            <person name="Vo N."/>
            <person name="Wagner M."/>
            <person name="Wheeler J."/>
            <person name="Wu K."/>
            <person name="Xie G."/>
            <person name="Yang J."/>
            <person name="Dubchak I."/>
            <person name="Furey T.S."/>
            <person name="DeJong P."/>
            <person name="Dickson M."/>
            <person name="Gordon D."/>
            <person name="Eichler E.E."/>
            <person name="Pennacchio L.A."/>
            <person name="Richardson P."/>
            <person name="Stubbs L."/>
            <person name="Rokhsar D.S."/>
            <person name="Myers R.M."/>
            <person name="Rubin E.M."/>
            <person name="Lucas S.M."/>
        </authorList>
    </citation>
    <scope>NUCLEOTIDE SEQUENCE [LARGE SCALE GENOMIC DNA]</scope>
</reference>
<reference key="5">
    <citation type="submission" date="2005-07" db="EMBL/GenBank/DDBJ databases">
        <authorList>
            <person name="Mural R.J."/>
            <person name="Istrail S."/>
            <person name="Sutton G.G."/>
            <person name="Florea L."/>
            <person name="Halpern A.L."/>
            <person name="Mobarry C.M."/>
            <person name="Lippert R."/>
            <person name="Walenz B."/>
            <person name="Shatkay H."/>
            <person name="Dew I."/>
            <person name="Miller J.R."/>
            <person name="Flanigan M.J."/>
            <person name="Edwards N.J."/>
            <person name="Bolanos R."/>
            <person name="Fasulo D."/>
            <person name="Halldorsson B.V."/>
            <person name="Hannenhalli S."/>
            <person name="Turner R."/>
            <person name="Yooseph S."/>
            <person name="Lu F."/>
            <person name="Nusskern D.R."/>
            <person name="Shue B.C."/>
            <person name="Zheng X.H."/>
            <person name="Zhong F."/>
            <person name="Delcher A.L."/>
            <person name="Huson D.H."/>
            <person name="Kravitz S.A."/>
            <person name="Mouchard L."/>
            <person name="Reinert K."/>
            <person name="Remington K.A."/>
            <person name="Clark A.G."/>
            <person name="Waterman M.S."/>
            <person name="Eichler E.E."/>
            <person name="Adams M.D."/>
            <person name="Hunkapiller M.W."/>
            <person name="Myers E.W."/>
            <person name="Venter J.C."/>
        </authorList>
    </citation>
    <scope>NUCLEOTIDE SEQUENCE [LARGE SCALE GENOMIC DNA]</scope>
</reference>
<reference key="6">
    <citation type="journal article" date="2004" name="Genome Res.">
        <title>The status, quality, and expansion of the NIH full-length cDNA project: the Mammalian Gene Collection (MGC).</title>
        <authorList>
            <consortium name="The MGC Project Team"/>
        </authorList>
    </citation>
    <scope>NUCLEOTIDE SEQUENCE [LARGE SCALE MRNA] (ISOFORM 3)</scope>
    <source>
        <tissue>Uterus</tissue>
    </source>
</reference>
<accession>Q6ZR52</accession>
<accession>G5E974</accession>
<accession>Q59GM3</accession>
<accession>Q6ZSF6</accession>
<accession>Q8N1Z6</accession>
<accession>Q8N965</accession>
<accession>Q9BR99</accession>
<feature type="chain" id="PRO_0000047616" description="Zinc finger protein 493">
    <location>
        <begin position="1"/>
        <end position="646"/>
    </location>
</feature>
<feature type="zinc finger region" description="C2H2-type 1; degenerate" evidence="1">
    <location>
        <begin position="26"/>
        <end position="48"/>
    </location>
</feature>
<feature type="zinc finger region" description="C2H2-type 2" evidence="1">
    <location>
        <begin position="54"/>
        <end position="76"/>
    </location>
</feature>
<feature type="zinc finger region" description="C2H2-type 3" evidence="1">
    <location>
        <begin position="82"/>
        <end position="104"/>
    </location>
</feature>
<feature type="zinc finger region" description="C2H2-type 4; degenerate" evidence="1">
    <location>
        <begin position="109"/>
        <end position="131"/>
    </location>
</feature>
<feature type="zinc finger region" description="C2H2-type 5" evidence="1">
    <location>
        <begin position="137"/>
        <end position="159"/>
    </location>
</feature>
<feature type="zinc finger region" description="C2H2-type 6; degenerate" evidence="1">
    <location>
        <begin position="165"/>
        <end position="187"/>
    </location>
</feature>
<feature type="zinc finger region" description="C2H2-type 7; degenerate" evidence="1">
    <location>
        <begin position="193"/>
        <end position="215"/>
    </location>
</feature>
<feature type="zinc finger region" description="C2H2-type 8; degenerate" evidence="1">
    <location>
        <begin position="221"/>
        <end position="243"/>
    </location>
</feature>
<feature type="zinc finger region" description="C2H2-type 9" evidence="1">
    <location>
        <begin position="249"/>
        <end position="271"/>
    </location>
</feature>
<feature type="zinc finger region" description="C2H2-type 10" evidence="1">
    <location>
        <begin position="277"/>
        <end position="299"/>
    </location>
</feature>
<feature type="zinc finger region" description="C2H2-type 11" evidence="1">
    <location>
        <begin position="305"/>
        <end position="327"/>
    </location>
</feature>
<feature type="zinc finger region" description="C2H2-type 12" evidence="1">
    <location>
        <begin position="333"/>
        <end position="355"/>
    </location>
</feature>
<feature type="zinc finger region" description="C2H2-type 13" evidence="1">
    <location>
        <begin position="361"/>
        <end position="383"/>
    </location>
</feature>
<feature type="zinc finger region" description="C2H2-type 14" evidence="1">
    <location>
        <begin position="389"/>
        <end position="411"/>
    </location>
</feature>
<feature type="zinc finger region" description="C2H2-type 15" evidence="1">
    <location>
        <begin position="417"/>
        <end position="439"/>
    </location>
</feature>
<feature type="zinc finger region" description="C2H2-type 16" evidence="1">
    <location>
        <begin position="445"/>
        <end position="467"/>
    </location>
</feature>
<feature type="zinc finger region" description="C2H2-type 17" evidence="1">
    <location>
        <begin position="473"/>
        <end position="495"/>
    </location>
</feature>
<feature type="zinc finger region" description="C2H2-type 18" evidence="1">
    <location>
        <begin position="501"/>
        <end position="523"/>
    </location>
</feature>
<feature type="zinc finger region" description="C2H2-type 19" evidence="1">
    <location>
        <begin position="529"/>
        <end position="551"/>
    </location>
</feature>
<feature type="zinc finger region" description="C2H2-type 20" evidence="1">
    <location>
        <begin position="557"/>
        <end position="579"/>
    </location>
</feature>
<feature type="zinc finger region" description="C2H2-type 21" evidence="1">
    <location>
        <begin position="585"/>
        <end position="607"/>
    </location>
</feature>
<feature type="zinc finger region" description="C2H2-type 22" evidence="1">
    <location>
        <begin position="613"/>
        <end position="635"/>
    </location>
</feature>
<feature type="splice variant" id="VSP_038298" description="In isoform 2." evidence="6">
    <original>M</original>
    <variation>MPGPPESLDMGPLTFRDVAIEFSLEEWQCLDTAQQDLYRKVMLENYRNLVFLGIAVSKPDLVTCLEQGKDPWNMKGHSTVVKPPVICSHFAEDFCPGPGIKDSFQKVILREYVKCGHKDLQLRKGCKSM</variation>
    <location>
        <position position="1"/>
    </location>
</feature>
<feature type="splice variant" id="VSP_046656" description="In isoform 3." evidence="5">
    <original>M</original>
    <variation>MPGPPESLDMGPLTFRDVAIEFSLEEWQCLDTAQQDLYRKVMLENYRNLVFLAGIAVSKPDLVTCLEQGKDPWNMKGHSTVVKPPVETGFHRFSQDGLYLLTS</variation>
    <location>
        <position position="1"/>
    </location>
</feature>
<feature type="splice variant" id="VSP_046657" description="In isoform 3." evidence="5">
    <location>
        <begin position="2"/>
        <end position="646"/>
    </location>
</feature>
<feature type="sequence variant" id="VAR_052846" description="In dbSNP:rs4621113." evidence="2 3 4">
    <original>C</original>
    <variation>F</variation>
    <location>
        <position position="195"/>
    </location>
</feature>
<feature type="sequence variant" id="VAR_052847" description="In dbSNP:rs10414834." evidence="2">
    <original>L</original>
    <variation>V</variation>
    <location>
        <position position="292"/>
    </location>
</feature>
<feature type="sequence conflict" description="In Ref. 1; BAC87465." evidence="7" ref="1">
    <original>T</original>
    <variation>I</variation>
    <location>
        <position position="181"/>
    </location>
</feature>
<feature type="sequence conflict" description="In Ref. 1; BAC87465." evidence="7" ref="1">
    <original>F</original>
    <variation>L</variation>
    <location>
        <position position="202"/>
    </location>
</feature>
<feature type="sequence conflict" description="In Ref. 1; BAC04591." evidence="7" ref="1">
    <original>C</original>
    <variation>R</variation>
    <location>
        <position position="335"/>
    </location>
</feature>
<feature type="sequence conflict" description="In Ref. 2; BAD92323." evidence="7" ref="2">
    <original>K</original>
    <variation>E</variation>
    <location>
        <position position="448"/>
    </location>
</feature>
<feature type="sequence conflict" description="In Ref. 1; BAC86997." evidence="7" ref="1">
    <original>H</original>
    <variation>Y</variation>
    <location>
        <position position="547"/>
    </location>
</feature>
<feature type="sequence conflict" description="In Ref. 6; AAH06408." evidence="7" ref="6">
    <original>S</original>
    <variation>G</variation>
    <location sequence="Q6ZR52-3">
        <position position="94"/>
    </location>
</feature>
<name>ZN493_HUMAN</name>
<protein>
    <recommendedName>
        <fullName>Zinc finger protein 493</fullName>
    </recommendedName>
</protein>
<keyword id="KW-0025">Alternative splicing</keyword>
<keyword id="KW-0238">DNA-binding</keyword>
<keyword id="KW-0479">Metal-binding</keyword>
<keyword id="KW-0539">Nucleus</keyword>
<keyword id="KW-1267">Proteomics identification</keyword>
<keyword id="KW-1185">Reference proteome</keyword>
<keyword id="KW-0677">Repeat</keyword>
<keyword id="KW-0804">Transcription</keyword>
<keyword id="KW-0805">Transcription regulation</keyword>
<keyword id="KW-0862">Zinc</keyword>
<keyword id="KW-0863">Zinc-finger</keyword>
<evidence type="ECO:0000255" key="1">
    <source>
        <dbReference type="PROSITE-ProRule" id="PRU00042"/>
    </source>
</evidence>
<evidence type="ECO:0000269" key="2">
    <source>
    </source>
</evidence>
<evidence type="ECO:0000269" key="3">
    <source>
    </source>
</evidence>
<evidence type="ECO:0000269" key="4">
    <source ref="2"/>
</evidence>
<evidence type="ECO:0000303" key="5">
    <source>
    </source>
</evidence>
<evidence type="ECO:0000303" key="6">
    <source>
    </source>
</evidence>
<evidence type="ECO:0000305" key="7"/>